<gene>
    <name evidence="1" type="primary">atpE</name>
    <name type="ordered locus">Cla_1201</name>
</gene>
<proteinExistence type="inferred from homology"/>
<comment type="function">
    <text evidence="1">F(1)F(0) ATP synthase produces ATP from ADP in the presence of a proton or sodium gradient. F-type ATPases consist of two structural domains, F(1) containing the extramembraneous catalytic core and F(0) containing the membrane proton channel, linked together by a central stalk and a peripheral stalk. During catalysis, ATP synthesis in the catalytic domain of F(1) is coupled via a rotary mechanism of the central stalk subunits to proton translocation.</text>
</comment>
<comment type="function">
    <text evidence="1">Key component of the F(0) channel; it plays a direct role in translocation across the membrane. A homomeric c-ring of between 10-14 subunits forms the central stalk rotor element with the F(1) delta and epsilon subunits.</text>
</comment>
<comment type="subunit">
    <text evidence="1">F-type ATPases have 2 components, F(1) - the catalytic core - and F(0) - the membrane proton channel. F(1) has five subunits: alpha(3), beta(3), gamma(1), delta(1), epsilon(1). F(0) has three main subunits: a(1), b(2) and c(10-14). The alpha and beta chains form an alternating ring which encloses part of the gamma chain. F(1) is attached to F(0) by a central stalk formed by the gamma and epsilon chains, while a peripheral stalk is formed by the delta and b chains.</text>
</comment>
<comment type="subcellular location">
    <subcellularLocation>
        <location evidence="1">Cell inner membrane</location>
        <topology evidence="1">Multi-pass membrane protein</topology>
    </subcellularLocation>
</comment>
<comment type="similarity">
    <text evidence="1">Belongs to the ATPase C chain family.</text>
</comment>
<keyword id="KW-0066">ATP synthesis</keyword>
<keyword id="KW-0997">Cell inner membrane</keyword>
<keyword id="KW-1003">Cell membrane</keyword>
<keyword id="KW-0138">CF(0)</keyword>
<keyword id="KW-0375">Hydrogen ion transport</keyword>
<keyword id="KW-0406">Ion transport</keyword>
<keyword id="KW-0446">Lipid-binding</keyword>
<keyword id="KW-0472">Membrane</keyword>
<keyword id="KW-1185">Reference proteome</keyword>
<keyword id="KW-0812">Transmembrane</keyword>
<keyword id="KW-1133">Transmembrane helix</keyword>
<keyword id="KW-0813">Transport</keyword>
<organism>
    <name type="scientific">Campylobacter lari (strain RM2100 / D67 / ATCC BAA-1060)</name>
    <dbReference type="NCBI Taxonomy" id="306263"/>
    <lineage>
        <taxon>Bacteria</taxon>
        <taxon>Pseudomonadati</taxon>
        <taxon>Campylobacterota</taxon>
        <taxon>Epsilonproteobacteria</taxon>
        <taxon>Campylobacterales</taxon>
        <taxon>Campylobacteraceae</taxon>
        <taxon>Campylobacter</taxon>
    </lineage>
</organism>
<accession>B9KD84</accession>
<feature type="chain" id="PRO_1000184344" description="ATP synthase subunit c">
    <location>
        <begin position="1"/>
        <end position="107"/>
    </location>
</feature>
<feature type="transmembrane region" description="Helical" evidence="1">
    <location>
        <begin position="4"/>
        <end position="24"/>
    </location>
</feature>
<feature type="transmembrane region" description="Helical" evidence="1">
    <location>
        <begin position="29"/>
        <end position="49"/>
    </location>
</feature>
<feature type="transmembrane region" description="Helical" evidence="1">
    <location>
        <begin position="74"/>
        <end position="94"/>
    </location>
</feature>
<feature type="site" description="Reversibly protonated during proton transport" evidence="1">
    <location>
        <position position="82"/>
    </location>
</feature>
<name>ATPL_CAMLR</name>
<evidence type="ECO:0000255" key="1">
    <source>
        <dbReference type="HAMAP-Rule" id="MF_01396"/>
    </source>
</evidence>
<sequence length="107" mass="10750">MKKIVFLMLALSGFAFAAEGSMNQWLASFSILAAGLGLGVAALGGAIGMGNTAAATIAGTARNPGLGGKLMTTMFIALAMIEAQVIYALVIALIALYANPFQALVAA</sequence>
<dbReference type="EMBL" id="CP000932">
    <property type="protein sequence ID" value="ACM64523.1"/>
    <property type="molecule type" value="Genomic_DNA"/>
</dbReference>
<dbReference type="RefSeq" id="WP_012661906.1">
    <property type="nucleotide sequence ID" value="NC_012039.1"/>
</dbReference>
<dbReference type="SMR" id="B9KD84"/>
<dbReference type="STRING" id="306263.Cla_1201"/>
<dbReference type="KEGG" id="cla:CLA_1201"/>
<dbReference type="eggNOG" id="COG0636">
    <property type="taxonomic scope" value="Bacteria"/>
</dbReference>
<dbReference type="HOGENOM" id="CLU_148047_0_1_7"/>
<dbReference type="Proteomes" id="UP000007727">
    <property type="component" value="Chromosome"/>
</dbReference>
<dbReference type="GO" id="GO:0005886">
    <property type="term" value="C:plasma membrane"/>
    <property type="evidence" value="ECO:0007669"/>
    <property type="project" value="UniProtKB-SubCell"/>
</dbReference>
<dbReference type="GO" id="GO:0045259">
    <property type="term" value="C:proton-transporting ATP synthase complex"/>
    <property type="evidence" value="ECO:0007669"/>
    <property type="project" value="UniProtKB-KW"/>
</dbReference>
<dbReference type="GO" id="GO:0033177">
    <property type="term" value="C:proton-transporting two-sector ATPase complex, proton-transporting domain"/>
    <property type="evidence" value="ECO:0007669"/>
    <property type="project" value="InterPro"/>
</dbReference>
<dbReference type="GO" id="GO:0008289">
    <property type="term" value="F:lipid binding"/>
    <property type="evidence" value="ECO:0007669"/>
    <property type="project" value="UniProtKB-KW"/>
</dbReference>
<dbReference type="GO" id="GO:0046933">
    <property type="term" value="F:proton-transporting ATP synthase activity, rotational mechanism"/>
    <property type="evidence" value="ECO:0007669"/>
    <property type="project" value="UniProtKB-UniRule"/>
</dbReference>
<dbReference type="CDD" id="cd18121">
    <property type="entry name" value="ATP-synt_Fo_c"/>
    <property type="match status" value="1"/>
</dbReference>
<dbReference type="FunFam" id="1.20.20.10:FF:000002">
    <property type="entry name" value="ATP synthase subunit c"/>
    <property type="match status" value="1"/>
</dbReference>
<dbReference type="Gene3D" id="1.20.20.10">
    <property type="entry name" value="F1F0 ATP synthase subunit C"/>
    <property type="match status" value="1"/>
</dbReference>
<dbReference type="HAMAP" id="MF_01396">
    <property type="entry name" value="ATP_synth_c_bact"/>
    <property type="match status" value="1"/>
</dbReference>
<dbReference type="InterPro" id="IPR005953">
    <property type="entry name" value="ATP_synth_csu_bac/chlpt"/>
</dbReference>
<dbReference type="InterPro" id="IPR000454">
    <property type="entry name" value="ATP_synth_F0_csu"/>
</dbReference>
<dbReference type="InterPro" id="IPR020537">
    <property type="entry name" value="ATP_synth_F0_csu_DDCD_BS"/>
</dbReference>
<dbReference type="InterPro" id="IPR038662">
    <property type="entry name" value="ATP_synth_F0_csu_sf"/>
</dbReference>
<dbReference type="InterPro" id="IPR002379">
    <property type="entry name" value="ATPase_proteolipid_c-like_dom"/>
</dbReference>
<dbReference type="InterPro" id="IPR035921">
    <property type="entry name" value="F/V-ATP_Csub_sf"/>
</dbReference>
<dbReference type="NCBIfam" id="TIGR01260">
    <property type="entry name" value="ATP_synt_c"/>
    <property type="match status" value="1"/>
</dbReference>
<dbReference type="NCBIfam" id="NF006295">
    <property type="entry name" value="PRK08482.1"/>
    <property type="match status" value="1"/>
</dbReference>
<dbReference type="Pfam" id="PF00137">
    <property type="entry name" value="ATP-synt_C"/>
    <property type="match status" value="1"/>
</dbReference>
<dbReference type="PRINTS" id="PR00124">
    <property type="entry name" value="ATPASEC"/>
</dbReference>
<dbReference type="SUPFAM" id="SSF81333">
    <property type="entry name" value="F1F0 ATP synthase subunit C"/>
    <property type="match status" value="1"/>
</dbReference>
<dbReference type="PROSITE" id="PS00605">
    <property type="entry name" value="ATPASE_C"/>
    <property type="match status" value="1"/>
</dbReference>
<protein>
    <recommendedName>
        <fullName evidence="1">ATP synthase subunit c</fullName>
    </recommendedName>
    <alternativeName>
        <fullName evidence="1">ATP synthase F(0) sector subunit c</fullName>
    </alternativeName>
    <alternativeName>
        <fullName evidence="1">F-type ATPase subunit c</fullName>
        <shortName evidence="1">F-ATPase subunit c</shortName>
    </alternativeName>
    <alternativeName>
        <fullName evidence="1">Lipid-binding protein</fullName>
    </alternativeName>
</protein>
<reference key="1">
    <citation type="journal article" date="2008" name="Foodborne Pathog. Dis.">
        <title>The complete genome sequence and analysis of the human pathogen Campylobacter lari.</title>
        <authorList>
            <person name="Miller W.G."/>
            <person name="Wang G."/>
            <person name="Binnewies T.T."/>
            <person name="Parker C.T."/>
        </authorList>
    </citation>
    <scope>NUCLEOTIDE SEQUENCE [LARGE SCALE GENOMIC DNA]</scope>
    <source>
        <strain>RM2100 / D67 / ATCC BAA-1060</strain>
    </source>
</reference>